<dbReference type="EC" id="2.4.2.29" evidence="1"/>
<dbReference type="EMBL" id="CP000681">
    <property type="protein sequence ID" value="ABP76205.1"/>
    <property type="molecule type" value="Genomic_DNA"/>
</dbReference>
<dbReference type="SMR" id="A4Y8C2"/>
<dbReference type="STRING" id="319224.Sputcn32_2484"/>
<dbReference type="KEGG" id="spc:Sputcn32_2484"/>
<dbReference type="eggNOG" id="COG0343">
    <property type="taxonomic scope" value="Bacteria"/>
</dbReference>
<dbReference type="HOGENOM" id="CLU_022060_0_1_6"/>
<dbReference type="UniPathway" id="UPA00392"/>
<dbReference type="GO" id="GO:0005829">
    <property type="term" value="C:cytosol"/>
    <property type="evidence" value="ECO:0007669"/>
    <property type="project" value="TreeGrafter"/>
</dbReference>
<dbReference type="GO" id="GO:0046872">
    <property type="term" value="F:metal ion binding"/>
    <property type="evidence" value="ECO:0007669"/>
    <property type="project" value="UniProtKB-KW"/>
</dbReference>
<dbReference type="GO" id="GO:0008479">
    <property type="term" value="F:tRNA-guanosine(34) queuine transglycosylase activity"/>
    <property type="evidence" value="ECO:0007669"/>
    <property type="project" value="UniProtKB-UniRule"/>
</dbReference>
<dbReference type="GO" id="GO:0008616">
    <property type="term" value="P:queuosine biosynthetic process"/>
    <property type="evidence" value="ECO:0007669"/>
    <property type="project" value="UniProtKB-UniRule"/>
</dbReference>
<dbReference type="GO" id="GO:0002099">
    <property type="term" value="P:tRNA wobble guanine modification"/>
    <property type="evidence" value="ECO:0007669"/>
    <property type="project" value="TreeGrafter"/>
</dbReference>
<dbReference type="GO" id="GO:0101030">
    <property type="term" value="P:tRNA-guanine transglycosylation"/>
    <property type="evidence" value="ECO:0007669"/>
    <property type="project" value="InterPro"/>
</dbReference>
<dbReference type="FunFam" id="3.20.20.105:FF:000001">
    <property type="entry name" value="Queuine tRNA-ribosyltransferase"/>
    <property type="match status" value="1"/>
</dbReference>
<dbReference type="Gene3D" id="3.20.20.105">
    <property type="entry name" value="Queuine tRNA-ribosyltransferase-like"/>
    <property type="match status" value="1"/>
</dbReference>
<dbReference type="HAMAP" id="MF_00168">
    <property type="entry name" value="Q_tRNA_Tgt"/>
    <property type="match status" value="1"/>
</dbReference>
<dbReference type="InterPro" id="IPR050076">
    <property type="entry name" value="ArchSynthase1/Queuine_TRR"/>
</dbReference>
<dbReference type="InterPro" id="IPR004803">
    <property type="entry name" value="TGT"/>
</dbReference>
<dbReference type="InterPro" id="IPR036511">
    <property type="entry name" value="TGT-like_sf"/>
</dbReference>
<dbReference type="InterPro" id="IPR002616">
    <property type="entry name" value="tRNA_ribo_trans-like"/>
</dbReference>
<dbReference type="NCBIfam" id="TIGR00430">
    <property type="entry name" value="Q_tRNA_tgt"/>
    <property type="match status" value="1"/>
</dbReference>
<dbReference type="NCBIfam" id="TIGR00449">
    <property type="entry name" value="tgt_general"/>
    <property type="match status" value="1"/>
</dbReference>
<dbReference type="PANTHER" id="PTHR46499">
    <property type="entry name" value="QUEUINE TRNA-RIBOSYLTRANSFERASE"/>
    <property type="match status" value="1"/>
</dbReference>
<dbReference type="PANTHER" id="PTHR46499:SF1">
    <property type="entry name" value="QUEUINE TRNA-RIBOSYLTRANSFERASE"/>
    <property type="match status" value="1"/>
</dbReference>
<dbReference type="Pfam" id="PF01702">
    <property type="entry name" value="TGT"/>
    <property type="match status" value="1"/>
</dbReference>
<dbReference type="SUPFAM" id="SSF51713">
    <property type="entry name" value="tRNA-guanine transglycosylase"/>
    <property type="match status" value="1"/>
</dbReference>
<reference key="1">
    <citation type="submission" date="2007-04" db="EMBL/GenBank/DDBJ databases">
        <title>Complete sequence of Shewanella putrefaciens CN-32.</title>
        <authorList>
            <consortium name="US DOE Joint Genome Institute"/>
            <person name="Copeland A."/>
            <person name="Lucas S."/>
            <person name="Lapidus A."/>
            <person name="Barry K."/>
            <person name="Detter J.C."/>
            <person name="Glavina del Rio T."/>
            <person name="Hammon N."/>
            <person name="Israni S."/>
            <person name="Dalin E."/>
            <person name="Tice H."/>
            <person name="Pitluck S."/>
            <person name="Chain P."/>
            <person name="Malfatti S."/>
            <person name="Shin M."/>
            <person name="Vergez L."/>
            <person name="Schmutz J."/>
            <person name="Larimer F."/>
            <person name="Land M."/>
            <person name="Hauser L."/>
            <person name="Kyrpides N."/>
            <person name="Mikhailova N."/>
            <person name="Romine M.F."/>
            <person name="Fredrickson J."/>
            <person name="Tiedje J."/>
            <person name="Richardson P."/>
        </authorList>
    </citation>
    <scope>NUCLEOTIDE SEQUENCE [LARGE SCALE GENOMIC DNA]</scope>
    <source>
        <strain>CN-32 / ATCC BAA-453</strain>
    </source>
</reference>
<evidence type="ECO:0000255" key="1">
    <source>
        <dbReference type="HAMAP-Rule" id="MF_00168"/>
    </source>
</evidence>
<gene>
    <name evidence="1" type="primary">tgt</name>
    <name type="ordered locus">Sputcn32_2484</name>
</gene>
<accession>A4Y8C2</accession>
<protein>
    <recommendedName>
        <fullName evidence="1">Queuine tRNA-ribosyltransferase</fullName>
        <ecNumber evidence="1">2.4.2.29</ecNumber>
    </recommendedName>
    <alternativeName>
        <fullName evidence="1">Guanine insertion enzyme</fullName>
    </alternativeName>
    <alternativeName>
        <fullName evidence="1">tRNA-guanine transglycosylase</fullName>
    </alternativeName>
</protein>
<proteinExistence type="inferred from homology"/>
<name>TGT_SHEPC</name>
<sequence length="374" mass="42398">MKFELDTTDGRARRGRLIFDRGTVETPAFMPVGTYGTVKGMTPEEVRATGADILLGNTFHLWLRPGEEIMRKHGDLHDFMNWQRPILTDSGGFQVFSLGDIRKITEEGVHFRSPINGEKIFLDPEKSMQIQDALGSDVVMIFDECTPYPATEDEARKSMQMSLRWAKRSRDEFDRLKNPNSLFGIIQGGVYEDLRDESLKGLVEIGFDGYAVGGLAVGEPKADMHRILEHICPQIPADKPRYLMGVGKPEDLVEGVRRGVDMFDCVMPTRNARNGHLFTSEGVIKIRNARHRDDTSPLDTKCDCYTCKNYSRAYLYHLDRCNEILGARLNTIHNLRYYQMLMEGLRGAIETGTLDAFVADFYTSQGREVPELVD</sequence>
<comment type="function">
    <text evidence="1">Catalyzes the base-exchange of a guanine (G) residue with the queuine precursor 7-aminomethyl-7-deazaguanine (PreQ1) at position 34 (anticodon wobble position) in tRNAs with GU(N) anticodons (tRNA-Asp, -Asn, -His and -Tyr). Catalysis occurs through a double-displacement mechanism. The nucleophile active site attacks the C1' of nucleotide 34 to detach the guanine base from the RNA, forming a covalent enzyme-RNA intermediate. The proton acceptor active site deprotonates the incoming PreQ1, allowing a nucleophilic attack on the C1' of the ribose to form the product. After dissociation, two additional enzymatic reactions on the tRNA convert PreQ1 to queuine (Q), resulting in the hypermodified nucleoside queuosine (7-(((4,5-cis-dihydroxy-2-cyclopenten-1-yl)amino)methyl)-7-deazaguanosine).</text>
</comment>
<comment type="catalytic activity">
    <reaction evidence="1">
        <text>7-aminomethyl-7-carbaguanine + guanosine(34) in tRNA = 7-aminomethyl-7-carbaguanosine(34) in tRNA + guanine</text>
        <dbReference type="Rhea" id="RHEA:24104"/>
        <dbReference type="Rhea" id="RHEA-COMP:10341"/>
        <dbReference type="Rhea" id="RHEA-COMP:10342"/>
        <dbReference type="ChEBI" id="CHEBI:16235"/>
        <dbReference type="ChEBI" id="CHEBI:58703"/>
        <dbReference type="ChEBI" id="CHEBI:74269"/>
        <dbReference type="ChEBI" id="CHEBI:82833"/>
        <dbReference type="EC" id="2.4.2.29"/>
    </reaction>
</comment>
<comment type="cofactor">
    <cofactor evidence="1">
        <name>Zn(2+)</name>
        <dbReference type="ChEBI" id="CHEBI:29105"/>
    </cofactor>
    <text evidence="1">Binds 1 zinc ion per subunit.</text>
</comment>
<comment type="pathway">
    <text evidence="1">tRNA modification; tRNA-queuosine biosynthesis.</text>
</comment>
<comment type="subunit">
    <text evidence="1">Homodimer. Within each dimer, one monomer is responsible for RNA recognition and catalysis, while the other monomer binds to the replacement base PreQ1.</text>
</comment>
<comment type="similarity">
    <text evidence="1">Belongs to the queuine tRNA-ribosyltransferase family.</text>
</comment>
<organism>
    <name type="scientific">Shewanella putrefaciens (strain CN-32 / ATCC BAA-453)</name>
    <dbReference type="NCBI Taxonomy" id="319224"/>
    <lineage>
        <taxon>Bacteria</taxon>
        <taxon>Pseudomonadati</taxon>
        <taxon>Pseudomonadota</taxon>
        <taxon>Gammaproteobacteria</taxon>
        <taxon>Alteromonadales</taxon>
        <taxon>Shewanellaceae</taxon>
        <taxon>Shewanella</taxon>
    </lineage>
</organism>
<feature type="chain" id="PRO_1000016849" description="Queuine tRNA-ribosyltransferase">
    <location>
        <begin position="1"/>
        <end position="374"/>
    </location>
</feature>
<feature type="region of interest" description="RNA binding" evidence="1">
    <location>
        <begin position="245"/>
        <end position="251"/>
    </location>
</feature>
<feature type="region of interest" description="RNA binding; important for wobble base 34 recognition" evidence="1">
    <location>
        <begin position="269"/>
        <end position="273"/>
    </location>
</feature>
<feature type="active site" description="Proton acceptor" evidence="1">
    <location>
        <position position="89"/>
    </location>
</feature>
<feature type="active site" description="Nucleophile" evidence="1">
    <location>
        <position position="264"/>
    </location>
</feature>
<feature type="binding site" evidence="1">
    <location>
        <begin position="89"/>
        <end position="93"/>
    </location>
    <ligand>
        <name>substrate</name>
    </ligand>
</feature>
<feature type="binding site" evidence="1">
    <location>
        <position position="143"/>
    </location>
    <ligand>
        <name>substrate</name>
    </ligand>
</feature>
<feature type="binding site" evidence="1">
    <location>
        <position position="187"/>
    </location>
    <ligand>
        <name>substrate</name>
    </ligand>
</feature>
<feature type="binding site" evidence="1">
    <location>
        <position position="214"/>
    </location>
    <ligand>
        <name>substrate</name>
    </ligand>
</feature>
<feature type="binding site" evidence="1">
    <location>
        <position position="302"/>
    </location>
    <ligand>
        <name>Zn(2+)</name>
        <dbReference type="ChEBI" id="CHEBI:29105"/>
    </ligand>
</feature>
<feature type="binding site" evidence="1">
    <location>
        <position position="304"/>
    </location>
    <ligand>
        <name>Zn(2+)</name>
        <dbReference type="ChEBI" id="CHEBI:29105"/>
    </ligand>
</feature>
<feature type="binding site" evidence="1">
    <location>
        <position position="307"/>
    </location>
    <ligand>
        <name>Zn(2+)</name>
        <dbReference type="ChEBI" id="CHEBI:29105"/>
    </ligand>
</feature>
<feature type="binding site" evidence="1">
    <location>
        <position position="333"/>
    </location>
    <ligand>
        <name>Zn(2+)</name>
        <dbReference type="ChEBI" id="CHEBI:29105"/>
    </ligand>
</feature>
<keyword id="KW-0328">Glycosyltransferase</keyword>
<keyword id="KW-0479">Metal-binding</keyword>
<keyword id="KW-0671">Queuosine biosynthesis</keyword>
<keyword id="KW-0808">Transferase</keyword>
<keyword id="KW-0819">tRNA processing</keyword>
<keyword id="KW-0862">Zinc</keyword>